<name>PELB_EMENI</name>
<comment type="function">
    <text evidence="3">Pectinolytic enzymes consist of four classes of enzymes: pectin lyase, polygalacturonase, pectin methylesterase and rhamnogalacturonase. Among pectinolytic enzymes, pectin lyase is the most important in depolymerization of pectin, since it cleaves internal glycosidic bonds of highly methylated pectins.</text>
</comment>
<comment type="catalytic activity">
    <reaction>
        <text>Eliminative cleavage of (1-&gt;4)-alpha-D-galacturonan methyl ester to give oligosaccharides with 4-deoxy-6-O-methyl-alpha-D-galact-4-enuronosyl groups at their non-reducing ends.</text>
        <dbReference type="EC" id="4.2.2.10"/>
    </reaction>
</comment>
<comment type="subcellular location">
    <subcellularLocation>
        <location evidence="4">Secreted</location>
    </subcellularLocation>
</comment>
<comment type="similarity">
    <text evidence="4">Belongs to the polysaccharide lyase 1 family.</text>
</comment>
<organism>
    <name type="scientific">Emericella nidulans (strain FGSC A4 / ATCC 38163 / CBS 112.46 / NRRL 194 / M139)</name>
    <name type="common">Aspergillus nidulans</name>
    <dbReference type="NCBI Taxonomy" id="227321"/>
    <lineage>
        <taxon>Eukaryota</taxon>
        <taxon>Fungi</taxon>
        <taxon>Dikarya</taxon>
        <taxon>Ascomycota</taxon>
        <taxon>Pezizomycotina</taxon>
        <taxon>Eurotiomycetes</taxon>
        <taxon>Eurotiomycetidae</taxon>
        <taxon>Eurotiales</taxon>
        <taxon>Aspergillaceae</taxon>
        <taxon>Aspergillus</taxon>
        <taxon>Aspergillus subgen. Nidulantes</taxon>
    </lineage>
</organism>
<sequence length="379" mass="39351">MRLHAPILSLLAAAASTSAAGVTGSAEGFAKGVTGGGSATPVYPSTTAELVSYLGDSSARVIVLTKTFDFTGTEGTTTETGCAPWGTASACQVAINKNDWCTNYQPNAPSVSVTYDNAGVLGITVKSNKSLVGEGSSGVIKGKGLRIVSGASNVIIQNIAITDLNPKYVWGGDAITLDNADMVWIDHVTTARIGRQHLVLGTSASNRVTVSNSYFNGVTSYSATCDGYHYWGIYLTGSNDMVTLKGNYIYHMSGRSPKVGGNTLLHAVNNYWYDSSGHAFEIDSGGYVLAEGNVFQNIPTVIEGTVGGQLFTSPDSSTNAICSTYLGHTCQVNGFGSSGTFKQADTAFLVNFQGKNIASASAYTVAQSSVPSNAGQGKL</sequence>
<dbReference type="EC" id="4.2.2.10"/>
<dbReference type="EMBL" id="DQ490480">
    <property type="protein sequence ID" value="ABF50856.1"/>
    <property type="molecule type" value="mRNA"/>
</dbReference>
<dbReference type="EMBL" id="AACD01000043">
    <property type="protein sequence ID" value="EAA64674.1"/>
    <property type="molecule type" value="Genomic_DNA"/>
</dbReference>
<dbReference type="EMBL" id="BN001307">
    <property type="protein sequence ID" value="CBF87116.1"/>
    <property type="molecule type" value="Genomic_DNA"/>
</dbReference>
<dbReference type="RefSeq" id="XP_660173.1">
    <property type="nucleotide sequence ID" value="XM_655081.1"/>
</dbReference>
<dbReference type="SMR" id="Q5BA61"/>
<dbReference type="STRING" id="227321.Q5BA61"/>
<dbReference type="CAZy" id="PL1">
    <property type="family name" value="Polysaccharide Lyase Family 1"/>
</dbReference>
<dbReference type="GlyCosmos" id="Q5BA61">
    <property type="glycosylation" value="1 site, No reported glycans"/>
</dbReference>
<dbReference type="EnsemblFungi" id="CBF87116">
    <property type="protein sequence ID" value="CBF87116"/>
    <property type="gene ID" value="ANIA_02569"/>
</dbReference>
<dbReference type="KEGG" id="ani:ANIA_02569"/>
<dbReference type="VEuPathDB" id="FungiDB:AN2569"/>
<dbReference type="eggNOG" id="ENOG502QXM6">
    <property type="taxonomic scope" value="Eukaryota"/>
</dbReference>
<dbReference type="HOGENOM" id="CLU_021980_0_1_1"/>
<dbReference type="InParanoid" id="Q5BA61"/>
<dbReference type="OMA" id="YLGHVCQ"/>
<dbReference type="OrthoDB" id="1637350at2759"/>
<dbReference type="Proteomes" id="UP000000560">
    <property type="component" value="Chromosome VII"/>
</dbReference>
<dbReference type="GO" id="GO:0005576">
    <property type="term" value="C:extracellular region"/>
    <property type="evidence" value="ECO:0007669"/>
    <property type="project" value="UniProtKB-SubCell"/>
</dbReference>
<dbReference type="GO" id="GO:0030570">
    <property type="term" value="F:pectate lyase activity"/>
    <property type="evidence" value="ECO:0007669"/>
    <property type="project" value="InterPro"/>
</dbReference>
<dbReference type="GO" id="GO:0047490">
    <property type="term" value="F:pectin lyase activity"/>
    <property type="evidence" value="ECO:0000314"/>
    <property type="project" value="UniProtKB"/>
</dbReference>
<dbReference type="GO" id="GO:0071555">
    <property type="term" value="P:cell wall organization"/>
    <property type="evidence" value="ECO:0007669"/>
    <property type="project" value="UniProtKB-KW"/>
</dbReference>
<dbReference type="GO" id="GO:0045490">
    <property type="term" value="P:pectin catabolic process"/>
    <property type="evidence" value="ECO:0000314"/>
    <property type="project" value="UniProtKB"/>
</dbReference>
<dbReference type="FunFam" id="2.160.20.10:FF:000003">
    <property type="entry name" value="Pectin lyase F"/>
    <property type="match status" value="1"/>
</dbReference>
<dbReference type="Gene3D" id="2.160.20.10">
    <property type="entry name" value="Single-stranded right-handed beta-helix, Pectin lyase-like"/>
    <property type="match status" value="1"/>
</dbReference>
<dbReference type="InterPro" id="IPR002022">
    <property type="entry name" value="Pec_lyase"/>
</dbReference>
<dbReference type="InterPro" id="IPR012334">
    <property type="entry name" value="Pectin_lyas_fold"/>
</dbReference>
<dbReference type="InterPro" id="IPR011050">
    <property type="entry name" value="Pectin_lyase_fold/virulence"/>
</dbReference>
<dbReference type="InterPro" id="IPR045032">
    <property type="entry name" value="PEL"/>
</dbReference>
<dbReference type="PANTHER" id="PTHR31683">
    <property type="entry name" value="PECTATE LYASE 18-RELATED"/>
    <property type="match status" value="1"/>
</dbReference>
<dbReference type="PANTHER" id="PTHR31683:SF16">
    <property type="entry name" value="PECTIN LYASE A-RELATED"/>
    <property type="match status" value="1"/>
</dbReference>
<dbReference type="Pfam" id="PF00544">
    <property type="entry name" value="Pectate_lyase_4"/>
    <property type="match status" value="1"/>
</dbReference>
<dbReference type="SMART" id="SM00656">
    <property type="entry name" value="Amb_all"/>
    <property type="match status" value="1"/>
</dbReference>
<dbReference type="SUPFAM" id="SSF51126">
    <property type="entry name" value="Pectin lyase-like"/>
    <property type="match status" value="1"/>
</dbReference>
<evidence type="ECO:0000250" key="1"/>
<evidence type="ECO:0000255" key="2"/>
<evidence type="ECO:0000269" key="3">
    <source>
    </source>
</evidence>
<evidence type="ECO:0000305" key="4"/>
<gene>
    <name type="primary">pelB</name>
    <name type="ORF">AN2569</name>
</gene>
<reference key="1">
    <citation type="journal article" date="2006" name="Proc. Natl. Acad. Sci. U.S.A.">
        <title>Development and application of a suite of polysaccharide-degrading enzymes for analyzing plant cell walls.</title>
        <authorList>
            <person name="Bauer S."/>
            <person name="Vasu P."/>
            <person name="Persson S."/>
            <person name="Mort A.J."/>
            <person name="Somerville C.R."/>
        </authorList>
    </citation>
    <scope>NUCLEOTIDE SEQUENCE [MRNA]</scope>
    <scope>FUNCTION</scope>
    <source>
        <strain>FGSC A4 / ATCC 38163 / CBS 112.46 / NRRL 194 / M139</strain>
    </source>
</reference>
<reference key="2">
    <citation type="journal article" date="2005" name="Nature">
        <title>Sequencing of Aspergillus nidulans and comparative analysis with A. fumigatus and A. oryzae.</title>
        <authorList>
            <person name="Galagan J.E."/>
            <person name="Calvo S.E."/>
            <person name="Cuomo C."/>
            <person name="Ma L.-J."/>
            <person name="Wortman J.R."/>
            <person name="Batzoglou S."/>
            <person name="Lee S.-I."/>
            <person name="Bastuerkmen M."/>
            <person name="Spevak C.C."/>
            <person name="Clutterbuck J."/>
            <person name="Kapitonov V."/>
            <person name="Jurka J."/>
            <person name="Scazzocchio C."/>
            <person name="Farman M.L."/>
            <person name="Butler J."/>
            <person name="Purcell S."/>
            <person name="Harris S."/>
            <person name="Braus G.H."/>
            <person name="Draht O."/>
            <person name="Busch S."/>
            <person name="D'Enfert C."/>
            <person name="Bouchier C."/>
            <person name="Goldman G.H."/>
            <person name="Bell-Pedersen D."/>
            <person name="Griffiths-Jones S."/>
            <person name="Doonan J.H."/>
            <person name="Yu J."/>
            <person name="Vienken K."/>
            <person name="Pain A."/>
            <person name="Freitag M."/>
            <person name="Selker E.U."/>
            <person name="Archer D.B."/>
            <person name="Penalva M.A."/>
            <person name="Oakley B.R."/>
            <person name="Momany M."/>
            <person name="Tanaka T."/>
            <person name="Kumagai T."/>
            <person name="Asai K."/>
            <person name="Machida M."/>
            <person name="Nierman W.C."/>
            <person name="Denning D.W."/>
            <person name="Caddick M.X."/>
            <person name="Hynes M."/>
            <person name="Paoletti M."/>
            <person name="Fischer R."/>
            <person name="Miller B.L."/>
            <person name="Dyer P.S."/>
            <person name="Sachs M.S."/>
            <person name="Osmani S.A."/>
            <person name="Birren B.W."/>
        </authorList>
    </citation>
    <scope>NUCLEOTIDE SEQUENCE [LARGE SCALE GENOMIC DNA]</scope>
    <source>
        <strain>FGSC A4 / ATCC 38163 / CBS 112.46 / NRRL 194 / M139</strain>
    </source>
</reference>
<reference key="3">
    <citation type="journal article" date="2009" name="Fungal Genet. Biol.">
        <title>The 2008 update of the Aspergillus nidulans genome annotation: a community effort.</title>
        <authorList>
            <person name="Wortman J.R."/>
            <person name="Gilsenan J.M."/>
            <person name="Joardar V."/>
            <person name="Deegan J."/>
            <person name="Clutterbuck J."/>
            <person name="Andersen M.R."/>
            <person name="Archer D."/>
            <person name="Bencina M."/>
            <person name="Braus G."/>
            <person name="Coutinho P."/>
            <person name="von Dohren H."/>
            <person name="Doonan J."/>
            <person name="Driessen A.J."/>
            <person name="Durek P."/>
            <person name="Espeso E."/>
            <person name="Fekete E."/>
            <person name="Flipphi M."/>
            <person name="Estrada C.G."/>
            <person name="Geysens S."/>
            <person name="Goldman G."/>
            <person name="de Groot P.W."/>
            <person name="Hansen K."/>
            <person name="Harris S.D."/>
            <person name="Heinekamp T."/>
            <person name="Helmstaedt K."/>
            <person name="Henrissat B."/>
            <person name="Hofmann G."/>
            <person name="Homan T."/>
            <person name="Horio T."/>
            <person name="Horiuchi H."/>
            <person name="James S."/>
            <person name="Jones M."/>
            <person name="Karaffa L."/>
            <person name="Karanyi Z."/>
            <person name="Kato M."/>
            <person name="Keller N."/>
            <person name="Kelly D.E."/>
            <person name="Kiel J.A."/>
            <person name="Kim J.M."/>
            <person name="van der Klei I.J."/>
            <person name="Klis F.M."/>
            <person name="Kovalchuk A."/>
            <person name="Krasevec N."/>
            <person name="Kubicek C.P."/>
            <person name="Liu B."/>
            <person name="Maccabe A."/>
            <person name="Meyer V."/>
            <person name="Mirabito P."/>
            <person name="Miskei M."/>
            <person name="Mos M."/>
            <person name="Mullins J."/>
            <person name="Nelson D.R."/>
            <person name="Nielsen J."/>
            <person name="Oakley B.R."/>
            <person name="Osmani S.A."/>
            <person name="Pakula T."/>
            <person name="Paszewski A."/>
            <person name="Paulsen I."/>
            <person name="Pilsyk S."/>
            <person name="Pocsi I."/>
            <person name="Punt P.J."/>
            <person name="Ram A.F."/>
            <person name="Ren Q."/>
            <person name="Robellet X."/>
            <person name="Robson G."/>
            <person name="Seiboth B."/>
            <person name="van Solingen P."/>
            <person name="Specht T."/>
            <person name="Sun J."/>
            <person name="Taheri-Talesh N."/>
            <person name="Takeshita N."/>
            <person name="Ussery D."/>
            <person name="vanKuyk P.A."/>
            <person name="Visser H."/>
            <person name="van de Vondervoort P.J."/>
            <person name="de Vries R.P."/>
            <person name="Walton J."/>
            <person name="Xiang X."/>
            <person name="Xiong Y."/>
            <person name="Zeng A.P."/>
            <person name="Brandt B.W."/>
            <person name="Cornell M.J."/>
            <person name="van den Hondel C.A."/>
            <person name="Visser J."/>
            <person name="Oliver S.G."/>
            <person name="Turner G."/>
        </authorList>
    </citation>
    <scope>GENOME REANNOTATION</scope>
    <source>
        <strain>FGSC A4 / ATCC 38163 / CBS 112.46 / NRRL 194 / M139</strain>
    </source>
</reference>
<feature type="signal peptide" evidence="2">
    <location>
        <begin position="1"/>
        <end position="19"/>
    </location>
</feature>
<feature type="chain" id="PRO_0000394348" description="Pectin lyase B">
    <location>
        <begin position="20"/>
        <end position="379"/>
    </location>
</feature>
<feature type="active site" evidence="2">
    <location>
        <position position="255"/>
    </location>
</feature>
<feature type="glycosylation site" description="N-linked (GlcNAc...) asparagine" evidence="2">
    <location>
        <position position="128"/>
    </location>
</feature>
<feature type="disulfide bond" evidence="1">
    <location>
        <begin position="82"/>
        <end position="101"/>
    </location>
</feature>
<feature type="disulfide bond" evidence="1">
    <location>
        <begin position="91"/>
        <end position="225"/>
    </location>
</feature>
<feature type="disulfide bond" evidence="1">
    <location>
        <begin position="322"/>
        <end position="330"/>
    </location>
</feature>
<accession>Q5BA61</accession>
<accession>C8VPV6</accession>
<accession>Q1HFU4</accession>
<proteinExistence type="evidence at transcript level"/>
<protein>
    <recommendedName>
        <fullName>Pectin lyase B</fullName>
        <shortName>PLB</shortName>
        <ecNumber>4.2.2.10</ecNumber>
    </recommendedName>
</protein>
<keyword id="KW-0119">Carbohydrate metabolism</keyword>
<keyword id="KW-0961">Cell wall biogenesis/degradation</keyword>
<keyword id="KW-1015">Disulfide bond</keyword>
<keyword id="KW-0325">Glycoprotein</keyword>
<keyword id="KW-0456">Lyase</keyword>
<keyword id="KW-0624">Polysaccharide degradation</keyword>
<keyword id="KW-1185">Reference proteome</keyword>
<keyword id="KW-0964">Secreted</keyword>
<keyword id="KW-0732">Signal</keyword>